<reference key="1">
    <citation type="submission" date="2007-11" db="EMBL/GenBank/DDBJ databases">
        <title>Complete sequence of Delftia acidovorans DSM 14801 / SPH-1.</title>
        <authorList>
            <person name="Copeland A."/>
            <person name="Lucas S."/>
            <person name="Lapidus A."/>
            <person name="Barry K."/>
            <person name="Glavina del Rio T."/>
            <person name="Dalin E."/>
            <person name="Tice H."/>
            <person name="Pitluck S."/>
            <person name="Lowry S."/>
            <person name="Clum A."/>
            <person name="Schmutz J."/>
            <person name="Larimer F."/>
            <person name="Land M."/>
            <person name="Hauser L."/>
            <person name="Kyrpides N."/>
            <person name="Kim E."/>
            <person name="Schleheck D."/>
            <person name="Richardson P."/>
        </authorList>
    </citation>
    <scope>NUCLEOTIDE SEQUENCE [LARGE SCALE GENOMIC DNA]</scope>
    <source>
        <strain>DSM 14801 / SPH-1</strain>
    </source>
</reference>
<comment type="function">
    <text evidence="1">Catalyzes the attachment of threonine to tRNA(Thr) in a two-step reaction: L-threonine is first activated by ATP to form Thr-AMP and then transferred to the acceptor end of tRNA(Thr). Also edits incorrectly charged L-seryl-tRNA(Thr).</text>
</comment>
<comment type="catalytic activity">
    <reaction evidence="1">
        <text>tRNA(Thr) + L-threonine + ATP = L-threonyl-tRNA(Thr) + AMP + diphosphate + H(+)</text>
        <dbReference type="Rhea" id="RHEA:24624"/>
        <dbReference type="Rhea" id="RHEA-COMP:9670"/>
        <dbReference type="Rhea" id="RHEA-COMP:9704"/>
        <dbReference type="ChEBI" id="CHEBI:15378"/>
        <dbReference type="ChEBI" id="CHEBI:30616"/>
        <dbReference type="ChEBI" id="CHEBI:33019"/>
        <dbReference type="ChEBI" id="CHEBI:57926"/>
        <dbReference type="ChEBI" id="CHEBI:78442"/>
        <dbReference type="ChEBI" id="CHEBI:78534"/>
        <dbReference type="ChEBI" id="CHEBI:456215"/>
        <dbReference type="EC" id="6.1.1.3"/>
    </reaction>
</comment>
<comment type="cofactor">
    <cofactor evidence="1">
        <name>Zn(2+)</name>
        <dbReference type="ChEBI" id="CHEBI:29105"/>
    </cofactor>
    <text evidence="1">Binds 1 zinc ion per subunit.</text>
</comment>
<comment type="subunit">
    <text evidence="1">Homodimer.</text>
</comment>
<comment type="subcellular location">
    <subcellularLocation>
        <location evidence="1">Cytoplasm</location>
    </subcellularLocation>
</comment>
<comment type="similarity">
    <text evidence="1">Belongs to the class-II aminoacyl-tRNA synthetase family.</text>
</comment>
<evidence type="ECO:0000255" key="1">
    <source>
        <dbReference type="HAMAP-Rule" id="MF_00184"/>
    </source>
</evidence>
<evidence type="ECO:0000255" key="2">
    <source>
        <dbReference type="PROSITE-ProRule" id="PRU01228"/>
    </source>
</evidence>
<dbReference type="EC" id="6.1.1.3" evidence="1"/>
<dbReference type="EMBL" id="CP000884">
    <property type="protein sequence ID" value="ABX37245.1"/>
    <property type="molecule type" value="Genomic_DNA"/>
</dbReference>
<dbReference type="RefSeq" id="WP_012206415.1">
    <property type="nucleotide sequence ID" value="NC_010002.1"/>
</dbReference>
<dbReference type="SMR" id="A9C3D4"/>
<dbReference type="STRING" id="398578.Daci_4616"/>
<dbReference type="GeneID" id="24113808"/>
<dbReference type="KEGG" id="dac:Daci_4616"/>
<dbReference type="eggNOG" id="COG0441">
    <property type="taxonomic scope" value="Bacteria"/>
</dbReference>
<dbReference type="HOGENOM" id="CLU_008554_0_1_4"/>
<dbReference type="Proteomes" id="UP000000784">
    <property type="component" value="Chromosome"/>
</dbReference>
<dbReference type="GO" id="GO:0005829">
    <property type="term" value="C:cytosol"/>
    <property type="evidence" value="ECO:0007669"/>
    <property type="project" value="TreeGrafter"/>
</dbReference>
<dbReference type="GO" id="GO:0005524">
    <property type="term" value="F:ATP binding"/>
    <property type="evidence" value="ECO:0007669"/>
    <property type="project" value="UniProtKB-UniRule"/>
</dbReference>
<dbReference type="GO" id="GO:0046872">
    <property type="term" value="F:metal ion binding"/>
    <property type="evidence" value="ECO:0007669"/>
    <property type="project" value="UniProtKB-KW"/>
</dbReference>
<dbReference type="GO" id="GO:0004829">
    <property type="term" value="F:threonine-tRNA ligase activity"/>
    <property type="evidence" value="ECO:0007669"/>
    <property type="project" value="UniProtKB-UniRule"/>
</dbReference>
<dbReference type="GO" id="GO:0000049">
    <property type="term" value="F:tRNA binding"/>
    <property type="evidence" value="ECO:0007669"/>
    <property type="project" value="UniProtKB-KW"/>
</dbReference>
<dbReference type="GO" id="GO:0006435">
    <property type="term" value="P:threonyl-tRNA aminoacylation"/>
    <property type="evidence" value="ECO:0007669"/>
    <property type="project" value="UniProtKB-UniRule"/>
</dbReference>
<dbReference type="CDD" id="cd01667">
    <property type="entry name" value="TGS_ThrRS"/>
    <property type="match status" value="1"/>
</dbReference>
<dbReference type="CDD" id="cd00860">
    <property type="entry name" value="ThrRS_anticodon"/>
    <property type="match status" value="1"/>
</dbReference>
<dbReference type="CDD" id="cd00771">
    <property type="entry name" value="ThrRS_core"/>
    <property type="match status" value="1"/>
</dbReference>
<dbReference type="FunFam" id="3.10.20.30:FF:000005">
    <property type="entry name" value="Threonine--tRNA ligase"/>
    <property type="match status" value="1"/>
</dbReference>
<dbReference type="FunFam" id="3.30.54.20:FF:000002">
    <property type="entry name" value="Threonine--tRNA ligase"/>
    <property type="match status" value="1"/>
</dbReference>
<dbReference type="FunFam" id="3.30.930.10:FF:000002">
    <property type="entry name" value="Threonine--tRNA ligase"/>
    <property type="match status" value="1"/>
</dbReference>
<dbReference type="FunFam" id="3.40.50.800:FF:000001">
    <property type="entry name" value="Threonine--tRNA ligase"/>
    <property type="match status" value="1"/>
</dbReference>
<dbReference type="FunFam" id="3.30.980.10:FF:000005">
    <property type="entry name" value="Threonyl-tRNA synthetase, mitochondrial"/>
    <property type="match status" value="1"/>
</dbReference>
<dbReference type="Gene3D" id="3.10.20.30">
    <property type="match status" value="1"/>
</dbReference>
<dbReference type="Gene3D" id="3.30.54.20">
    <property type="match status" value="1"/>
</dbReference>
<dbReference type="Gene3D" id="3.40.50.800">
    <property type="entry name" value="Anticodon-binding domain"/>
    <property type="match status" value="1"/>
</dbReference>
<dbReference type="Gene3D" id="3.30.930.10">
    <property type="entry name" value="Bira Bifunctional Protein, Domain 2"/>
    <property type="match status" value="1"/>
</dbReference>
<dbReference type="Gene3D" id="3.30.980.10">
    <property type="entry name" value="Threonyl-trna Synthetase, Chain A, domain 2"/>
    <property type="match status" value="1"/>
</dbReference>
<dbReference type="HAMAP" id="MF_00184">
    <property type="entry name" value="Thr_tRNA_synth"/>
    <property type="match status" value="1"/>
</dbReference>
<dbReference type="InterPro" id="IPR002314">
    <property type="entry name" value="aa-tRNA-synt_IIb"/>
</dbReference>
<dbReference type="InterPro" id="IPR006195">
    <property type="entry name" value="aa-tRNA-synth_II"/>
</dbReference>
<dbReference type="InterPro" id="IPR045864">
    <property type="entry name" value="aa-tRNA-synth_II/BPL/LPL"/>
</dbReference>
<dbReference type="InterPro" id="IPR004154">
    <property type="entry name" value="Anticodon-bd"/>
</dbReference>
<dbReference type="InterPro" id="IPR036621">
    <property type="entry name" value="Anticodon-bd_dom_sf"/>
</dbReference>
<dbReference type="InterPro" id="IPR012675">
    <property type="entry name" value="Beta-grasp_dom_sf"/>
</dbReference>
<dbReference type="InterPro" id="IPR004095">
    <property type="entry name" value="TGS"/>
</dbReference>
<dbReference type="InterPro" id="IPR012676">
    <property type="entry name" value="TGS-like"/>
</dbReference>
<dbReference type="InterPro" id="IPR002320">
    <property type="entry name" value="Thr-tRNA-ligase_IIa"/>
</dbReference>
<dbReference type="InterPro" id="IPR018163">
    <property type="entry name" value="Thr/Ala-tRNA-synth_IIc_edit"/>
</dbReference>
<dbReference type="InterPro" id="IPR047246">
    <property type="entry name" value="ThrRS_anticodon"/>
</dbReference>
<dbReference type="InterPro" id="IPR033728">
    <property type="entry name" value="ThrRS_core"/>
</dbReference>
<dbReference type="InterPro" id="IPR012947">
    <property type="entry name" value="tRNA_SAD"/>
</dbReference>
<dbReference type="NCBIfam" id="TIGR00418">
    <property type="entry name" value="thrS"/>
    <property type="match status" value="1"/>
</dbReference>
<dbReference type="PANTHER" id="PTHR11451:SF44">
    <property type="entry name" value="THREONINE--TRNA LIGASE, CHLOROPLASTIC_MITOCHONDRIAL 2"/>
    <property type="match status" value="1"/>
</dbReference>
<dbReference type="PANTHER" id="PTHR11451">
    <property type="entry name" value="THREONINE-TRNA LIGASE"/>
    <property type="match status" value="1"/>
</dbReference>
<dbReference type="Pfam" id="PF03129">
    <property type="entry name" value="HGTP_anticodon"/>
    <property type="match status" value="1"/>
</dbReference>
<dbReference type="Pfam" id="PF02824">
    <property type="entry name" value="TGS"/>
    <property type="match status" value="1"/>
</dbReference>
<dbReference type="Pfam" id="PF00587">
    <property type="entry name" value="tRNA-synt_2b"/>
    <property type="match status" value="1"/>
</dbReference>
<dbReference type="Pfam" id="PF07973">
    <property type="entry name" value="tRNA_SAD"/>
    <property type="match status" value="1"/>
</dbReference>
<dbReference type="PRINTS" id="PR01047">
    <property type="entry name" value="TRNASYNTHTHR"/>
</dbReference>
<dbReference type="SMART" id="SM00863">
    <property type="entry name" value="tRNA_SAD"/>
    <property type="match status" value="1"/>
</dbReference>
<dbReference type="SUPFAM" id="SSF52954">
    <property type="entry name" value="Class II aaRS ABD-related"/>
    <property type="match status" value="1"/>
</dbReference>
<dbReference type="SUPFAM" id="SSF55681">
    <property type="entry name" value="Class II aaRS and biotin synthetases"/>
    <property type="match status" value="1"/>
</dbReference>
<dbReference type="SUPFAM" id="SSF81271">
    <property type="entry name" value="TGS-like"/>
    <property type="match status" value="1"/>
</dbReference>
<dbReference type="SUPFAM" id="SSF55186">
    <property type="entry name" value="ThrRS/AlaRS common domain"/>
    <property type="match status" value="1"/>
</dbReference>
<dbReference type="PROSITE" id="PS50862">
    <property type="entry name" value="AA_TRNA_LIGASE_II"/>
    <property type="match status" value="1"/>
</dbReference>
<dbReference type="PROSITE" id="PS51880">
    <property type="entry name" value="TGS"/>
    <property type="match status" value="1"/>
</dbReference>
<sequence length="643" mass="72275">MIHITLPDGSQREYPGPVTVAEVAASIGTGLAKAALAGKVGTGDDAKVVDTSFVINKDMPLSIVTAKDADGLDVIRHSTAHLLAYAVKDLFPDAQVTIGPVIENGFYYDFSYKRPFTPEDLVAIEKRMAELAAKDEPVVRRVLPRDEAVAYFKGIGENYKAEIIASIPSNEDVSLYREGSFEDLCRGPHVPSTGKLKFFKLMKVAGAYWRGDHRNEMLQRVYGTAWASKDDLQQYLHMLEEAEKRDHRKLGRELDLFHIDEHSPGTVFWHPKGWSLWQEVEQYMRRVYRDNGYQEVKGPQILDKTLWEKTGHWDKYRENMFTTESEKRDYALKPMNCPGHILIFKQGIKSYRDLPLRYGEFGQCHRNEPTGGLHGIMRVRGFTQDDGHVFCTEDQIQPEVLAFTTLLQKVYADFGFSDIIYKVATRPEARIGSDESWDKAEAALINSLEASGCEYVISPGDGAFYGPKIEYTLKDAIGRQWQCGTIQVDFSMPERLDAEYVGEDGDRHRPVMLHRAIVGSLERFIGILIEQHAGAMPTWLAPVQAAVLNITDAQADYVREVAQKLQKAFPNQGLRVATDLRNEKITYKIREHSLQKLPYILVAGDKEKAAGAVAVRARGNKDLGVMSVDAFIELVAKDIAAKA</sequence>
<keyword id="KW-0030">Aminoacyl-tRNA synthetase</keyword>
<keyword id="KW-0067">ATP-binding</keyword>
<keyword id="KW-0963">Cytoplasm</keyword>
<keyword id="KW-0436">Ligase</keyword>
<keyword id="KW-0479">Metal-binding</keyword>
<keyword id="KW-0547">Nucleotide-binding</keyword>
<keyword id="KW-0648">Protein biosynthesis</keyword>
<keyword id="KW-1185">Reference proteome</keyword>
<keyword id="KW-0694">RNA-binding</keyword>
<keyword id="KW-0820">tRNA-binding</keyword>
<keyword id="KW-0862">Zinc</keyword>
<proteinExistence type="inferred from homology"/>
<name>SYT_DELAS</name>
<feature type="chain" id="PRO_1000098566" description="Threonine--tRNA ligase">
    <location>
        <begin position="1"/>
        <end position="643"/>
    </location>
</feature>
<feature type="domain" description="TGS" evidence="2">
    <location>
        <begin position="1"/>
        <end position="65"/>
    </location>
</feature>
<feature type="region of interest" description="Catalytic" evidence="1">
    <location>
        <begin position="246"/>
        <end position="537"/>
    </location>
</feature>
<feature type="binding site" evidence="1">
    <location>
        <position position="337"/>
    </location>
    <ligand>
        <name>Zn(2+)</name>
        <dbReference type="ChEBI" id="CHEBI:29105"/>
    </ligand>
</feature>
<feature type="binding site" evidence="1">
    <location>
        <position position="388"/>
    </location>
    <ligand>
        <name>Zn(2+)</name>
        <dbReference type="ChEBI" id="CHEBI:29105"/>
    </ligand>
</feature>
<feature type="binding site" evidence="1">
    <location>
        <position position="514"/>
    </location>
    <ligand>
        <name>Zn(2+)</name>
        <dbReference type="ChEBI" id="CHEBI:29105"/>
    </ligand>
</feature>
<accession>A9C3D4</accession>
<protein>
    <recommendedName>
        <fullName evidence="1">Threonine--tRNA ligase</fullName>
        <ecNumber evidence="1">6.1.1.3</ecNumber>
    </recommendedName>
    <alternativeName>
        <fullName evidence="1">Threonyl-tRNA synthetase</fullName>
        <shortName evidence="1">ThrRS</shortName>
    </alternativeName>
</protein>
<organism>
    <name type="scientific">Delftia acidovorans (strain DSM 14801 / SPH-1)</name>
    <dbReference type="NCBI Taxonomy" id="398578"/>
    <lineage>
        <taxon>Bacteria</taxon>
        <taxon>Pseudomonadati</taxon>
        <taxon>Pseudomonadota</taxon>
        <taxon>Betaproteobacteria</taxon>
        <taxon>Burkholderiales</taxon>
        <taxon>Comamonadaceae</taxon>
        <taxon>Delftia</taxon>
    </lineage>
</organism>
<gene>
    <name evidence="1" type="primary">thrS</name>
    <name type="ordered locus">Daci_4616</name>
</gene>